<organism>
    <name type="scientific">Campylobacter jejuni (strain RM1221)</name>
    <dbReference type="NCBI Taxonomy" id="195099"/>
    <lineage>
        <taxon>Bacteria</taxon>
        <taxon>Pseudomonadati</taxon>
        <taxon>Campylobacterota</taxon>
        <taxon>Epsilonproteobacteria</taxon>
        <taxon>Campylobacterales</taxon>
        <taxon>Campylobacteraceae</taxon>
        <taxon>Campylobacter</taxon>
    </lineage>
</organism>
<comment type="function">
    <text evidence="1">Converts 2C-methyl-D-erythritol 2,4-cyclodiphosphate (ME-2,4cPP) into 1-hydroxy-2-methyl-2-(E)-butenyl 4-diphosphate.</text>
</comment>
<comment type="catalytic activity">
    <reaction evidence="1">
        <text>(2E)-4-hydroxy-3-methylbut-2-enyl diphosphate + oxidized [flavodoxin] + H2O + 2 H(+) = 2-C-methyl-D-erythritol 2,4-cyclic diphosphate + reduced [flavodoxin]</text>
        <dbReference type="Rhea" id="RHEA:43604"/>
        <dbReference type="Rhea" id="RHEA-COMP:10622"/>
        <dbReference type="Rhea" id="RHEA-COMP:10623"/>
        <dbReference type="ChEBI" id="CHEBI:15377"/>
        <dbReference type="ChEBI" id="CHEBI:15378"/>
        <dbReference type="ChEBI" id="CHEBI:57618"/>
        <dbReference type="ChEBI" id="CHEBI:58210"/>
        <dbReference type="ChEBI" id="CHEBI:58483"/>
        <dbReference type="ChEBI" id="CHEBI:128753"/>
        <dbReference type="EC" id="1.17.7.3"/>
    </reaction>
</comment>
<comment type="cofactor">
    <cofactor evidence="1">
        <name>[4Fe-4S] cluster</name>
        <dbReference type="ChEBI" id="CHEBI:49883"/>
    </cofactor>
    <text evidence="1">Binds 1 [4Fe-4S] cluster.</text>
</comment>
<comment type="pathway">
    <text evidence="1">Isoprenoid biosynthesis; isopentenyl diphosphate biosynthesis via DXP pathway; isopentenyl diphosphate from 1-deoxy-D-xylulose 5-phosphate: step 5/6.</text>
</comment>
<comment type="similarity">
    <text evidence="1">Belongs to the IspG family.</text>
</comment>
<proteinExistence type="inferred from homology"/>
<gene>
    <name evidence="1" type="primary">ispG</name>
    <name type="ordered locus">CJE0785</name>
</gene>
<keyword id="KW-0004">4Fe-4S</keyword>
<keyword id="KW-0408">Iron</keyword>
<keyword id="KW-0411">Iron-sulfur</keyword>
<keyword id="KW-0414">Isoprene biosynthesis</keyword>
<keyword id="KW-0479">Metal-binding</keyword>
<keyword id="KW-0560">Oxidoreductase</keyword>
<dbReference type="EC" id="1.17.7.3" evidence="1"/>
<dbReference type="EMBL" id="CP000025">
    <property type="protein sequence ID" value="AAW34572.1"/>
    <property type="molecule type" value="Genomic_DNA"/>
</dbReference>
<dbReference type="RefSeq" id="WP_011049760.1">
    <property type="nucleotide sequence ID" value="NC_003912.7"/>
</dbReference>
<dbReference type="SMR" id="Q5HV95"/>
<dbReference type="KEGG" id="cjr:CJE0785"/>
<dbReference type="HOGENOM" id="CLU_042258_0_0_7"/>
<dbReference type="UniPathway" id="UPA00056">
    <property type="reaction ID" value="UER00096"/>
</dbReference>
<dbReference type="GO" id="GO:0051539">
    <property type="term" value="F:4 iron, 4 sulfur cluster binding"/>
    <property type="evidence" value="ECO:0007669"/>
    <property type="project" value="UniProtKB-UniRule"/>
</dbReference>
<dbReference type="GO" id="GO:0046429">
    <property type="term" value="F:4-hydroxy-3-methylbut-2-en-1-yl diphosphate synthase activity (ferredoxin)"/>
    <property type="evidence" value="ECO:0007669"/>
    <property type="project" value="UniProtKB-UniRule"/>
</dbReference>
<dbReference type="GO" id="GO:0141197">
    <property type="term" value="F:4-hydroxy-3-methylbut-2-enyl-diphosphate synthase activity (flavodoxin)"/>
    <property type="evidence" value="ECO:0007669"/>
    <property type="project" value="UniProtKB-EC"/>
</dbReference>
<dbReference type="GO" id="GO:0005506">
    <property type="term" value="F:iron ion binding"/>
    <property type="evidence" value="ECO:0007669"/>
    <property type="project" value="InterPro"/>
</dbReference>
<dbReference type="GO" id="GO:0019288">
    <property type="term" value="P:isopentenyl diphosphate biosynthetic process, methylerythritol 4-phosphate pathway"/>
    <property type="evidence" value="ECO:0007669"/>
    <property type="project" value="UniProtKB-UniRule"/>
</dbReference>
<dbReference type="GO" id="GO:0016114">
    <property type="term" value="P:terpenoid biosynthetic process"/>
    <property type="evidence" value="ECO:0007669"/>
    <property type="project" value="InterPro"/>
</dbReference>
<dbReference type="FunFam" id="3.20.20.20:FF:000001">
    <property type="entry name" value="4-hydroxy-3-methylbut-2-en-1-yl diphosphate synthase (flavodoxin)"/>
    <property type="match status" value="1"/>
</dbReference>
<dbReference type="Gene3D" id="3.20.20.20">
    <property type="entry name" value="Dihydropteroate synthase-like"/>
    <property type="match status" value="1"/>
</dbReference>
<dbReference type="Gene3D" id="3.30.413.10">
    <property type="entry name" value="Sulfite Reductase Hemoprotein, domain 1"/>
    <property type="match status" value="1"/>
</dbReference>
<dbReference type="HAMAP" id="MF_00159">
    <property type="entry name" value="IspG"/>
    <property type="match status" value="1"/>
</dbReference>
<dbReference type="InterPro" id="IPR011005">
    <property type="entry name" value="Dihydropteroate_synth-like_sf"/>
</dbReference>
<dbReference type="InterPro" id="IPR016425">
    <property type="entry name" value="IspG_bac"/>
</dbReference>
<dbReference type="InterPro" id="IPR004588">
    <property type="entry name" value="IspG_bac-typ"/>
</dbReference>
<dbReference type="InterPro" id="IPR045854">
    <property type="entry name" value="NO2/SO3_Rdtase_4Fe4S_sf"/>
</dbReference>
<dbReference type="NCBIfam" id="TIGR00612">
    <property type="entry name" value="ispG_gcpE"/>
    <property type="match status" value="1"/>
</dbReference>
<dbReference type="NCBIfam" id="NF001540">
    <property type="entry name" value="PRK00366.1"/>
    <property type="match status" value="1"/>
</dbReference>
<dbReference type="PANTHER" id="PTHR30454">
    <property type="entry name" value="4-HYDROXY-3-METHYLBUT-2-EN-1-YL DIPHOSPHATE SYNTHASE"/>
    <property type="match status" value="1"/>
</dbReference>
<dbReference type="PANTHER" id="PTHR30454:SF0">
    <property type="entry name" value="4-HYDROXY-3-METHYLBUT-2-EN-1-YL DIPHOSPHATE SYNTHASE (FERREDOXIN), CHLOROPLASTIC"/>
    <property type="match status" value="1"/>
</dbReference>
<dbReference type="Pfam" id="PF04551">
    <property type="entry name" value="GcpE"/>
    <property type="match status" value="1"/>
</dbReference>
<dbReference type="PIRSF" id="PIRSF004640">
    <property type="entry name" value="IspG"/>
    <property type="match status" value="1"/>
</dbReference>
<dbReference type="SUPFAM" id="SSF51717">
    <property type="entry name" value="Dihydropteroate synthetase-like"/>
    <property type="match status" value="1"/>
</dbReference>
<dbReference type="SUPFAM" id="SSF56014">
    <property type="entry name" value="Nitrite and sulphite reductase 4Fe-4S domain-like"/>
    <property type="match status" value="1"/>
</dbReference>
<name>ISPG_CAMJR</name>
<accession>Q5HV95</accession>
<protein>
    <recommendedName>
        <fullName evidence="1">4-hydroxy-3-methylbut-2-en-1-yl diphosphate synthase (flavodoxin)</fullName>
        <ecNumber evidence="1">1.17.7.3</ecNumber>
    </recommendedName>
    <alternativeName>
        <fullName evidence="1">1-hydroxy-2-methyl-2-(E)-butenyl 4-diphosphate synthase</fullName>
    </alternativeName>
</protein>
<reference key="1">
    <citation type="journal article" date="2005" name="PLoS Biol.">
        <title>Major structural differences and novel potential virulence mechanisms from the genomes of multiple Campylobacter species.</title>
        <authorList>
            <person name="Fouts D.E."/>
            <person name="Mongodin E.F."/>
            <person name="Mandrell R.E."/>
            <person name="Miller W.G."/>
            <person name="Rasko D.A."/>
            <person name="Ravel J."/>
            <person name="Brinkac L.M."/>
            <person name="DeBoy R.T."/>
            <person name="Parker C.T."/>
            <person name="Daugherty S.C."/>
            <person name="Dodson R.J."/>
            <person name="Durkin A.S."/>
            <person name="Madupu R."/>
            <person name="Sullivan S.A."/>
            <person name="Shetty J.U."/>
            <person name="Ayodeji M.A."/>
            <person name="Shvartsbeyn A."/>
            <person name="Schatz M.C."/>
            <person name="Badger J.H."/>
            <person name="Fraser C.M."/>
            <person name="Nelson K.E."/>
        </authorList>
    </citation>
    <scope>NUCLEOTIDE SEQUENCE [LARGE SCALE GENOMIC DNA]</scope>
    <source>
        <strain>RM1221</strain>
    </source>
</reference>
<evidence type="ECO:0000255" key="1">
    <source>
        <dbReference type="HAMAP-Rule" id="MF_00159"/>
    </source>
</evidence>
<sequence length="357" mass="39352">MEYKRFKTRQIKVGNVLIGGDAPISVQSMLFTKTRDIEGSLEQINRLYFAGANIVRLACLDMADARALKEIKAKSPLPLIVDIHFNHNLAVYCAEFIDGVRINPGNIGSKENIKEVVKACKERGIPIRIGINHGSIEKQFSDKFGYGVDAMLESAMYNIKLLEDLDFFDIKISMKTSDAQKTIEAYERLRPLCDYPFHLGVTEAGTKFHSTVKSSIALGNLLLKGIGDTMRVSMTGELEEEIRVARAILQDSGVQKSGVNIISCPTCGRIQSDLLSAIKIVEEKTKHIKEPLNISVMGCVVNALGEAKGADVAIAFGKNQGLVIRHGEVVAKLKESELVDRFLAEVEDEVKSRAVKE</sequence>
<feature type="chain" id="PRO_0000190554" description="4-hydroxy-3-methylbut-2-en-1-yl diphosphate synthase (flavodoxin)">
    <location>
        <begin position="1"/>
        <end position="357"/>
    </location>
</feature>
<feature type="binding site" evidence="1">
    <location>
        <position position="264"/>
    </location>
    <ligand>
        <name>[4Fe-4S] cluster</name>
        <dbReference type="ChEBI" id="CHEBI:49883"/>
    </ligand>
</feature>
<feature type="binding site" evidence="1">
    <location>
        <position position="267"/>
    </location>
    <ligand>
        <name>[4Fe-4S] cluster</name>
        <dbReference type="ChEBI" id="CHEBI:49883"/>
    </ligand>
</feature>
<feature type="binding site" evidence="1">
    <location>
        <position position="299"/>
    </location>
    <ligand>
        <name>[4Fe-4S] cluster</name>
        <dbReference type="ChEBI" id="CHEBI:49883"/>
    </ligand>
</feature>
<feature type="binding site" evidence="1">
    <location>
        <position position="306"/>
    </location>
    <ligand>
        <name>[4Fe-4S] cluster</name>
        <dbReference type="ChEBI" id="CHEBI:49883"/>
    </ligand>
</feature>